<feature type="chain" id="PRO_0000399979" description="Protein NRT1/ PTR FAMILY 5.7">
    <location>
        <begin position="1"/>
        <end position="602"/>
    </location>
</feature>
<feature type="transmembrane region" description="Helical" evidence="3">
    <location>
        <begin position="56"/>
        <end position="73"/>
    </location>
</feature>
<feature type="transmembrane region" description="Helical" evidence="3">
    <location>
        <begin position="87"/>
        <end position="107"/>
    </location>
</feature>
<feature type="transmembrane region" description="Helical" evidence="3">
    <location>
        <begin position="112"/>
        <end position="132"/>
    </location>
</feature>
<feature type="transmembrane region" description="Helical" evidence="3">
    <location>
        <begin position="152"/>
        <end position="172"/>
    </location>
</feature>
<feature type="transmembrane region" description="Helical" evidence="3">
    <location>
        <begin position="197"/>
        <end position="217"/>
    </location>
</feature>
<feature type="transmembrane region" description="Helical" evidence="3">
    <location>
        <begin position="220"/>
        <end position="240"/>
    </location>
</feature>
<feature type="transmembrane region" description="Helical" evidence="3">
    <location>
        <begin position="337"/>
        <end position="357"/>
    </location>
</feature>
<feature type="transmembrane region" description="Helical" evidence="3">
    <location>
        <begin position="381"/>
        <end position="401"/>
    </location>
</feature>
<feature type="transmembrane region" description="Helical" evidence="3">
    <location>
        <begin position="422"/>
        <end position="442"/>
    </location>
</feature>
<feature type="transmembrane region" description="Helical" evidence="3">
    <location>
        <begin position="465"/>
        <end position="485"/>
    </location>
</feature>
<feature type="transmembrane region" description="Helical" evidence="3">
    <location>
        <begin position="500"/>
        <end position="520"/>
    </location>
</feature>
<feature type="transmembrane region" description="Helical" evidence="3">
    <location>
        <begin position="548"/>
        <end position="568"/>
    </location>
</feature>
<feature type="modified residue" description="Phosphothreonine" evidence="2">
    <location>
        <position position="111"/>
    </location>
</feature>
<organism>
    <name type="scientific">Arabidopsis thaliana</name>
    <name type="common">Mouse-ear cress</name>
    <dbReference type="NCBI Taxonomy" id="3702"/>
    <lineage>
        <taxon>Eukaryota</taxon>
        <taxon>Viridiplantae</taxon>
        <taxon>Streptophyta</taxon>
        <taxon>Embryophyta</taxon>
        <taxon>Tracheophyta</taxon>
        <taxon>Spermatophyta</taxon>
        <taxon>Magnoliopsida</taxon>
        <taxon>eudicotyledons</taxon>
        <taxon>Gunneridae</taxon>
        <taxon>Pentapetalae</taxon>
        <taxon>rosids</taxon>
        <taxon>malvids</taxon>
        <taxon>Brassicales</taxon>
        <taxon>Brassicaceae</taxon>
        <taxon>Camelineae</taxon>
        <taxon>Arabidopsis</taxon>
    </lineage>
</organism>
<comment type="subcellular location">
    <subcellularLocation>
        <location evidence="1">Membrane</location>
        <topology evidence="1">Multi-pass membrane protein</topology>
    </subcellularLocation>
</comment>
<comment type="tissue specificity">
    <text evidence="4">Expressed in shoots, stems, leaves and flowers.</text>
</comment>
<comment type="similarity">
    <text evidence="5">Belongs to the major facilitator superfamily. Proton-dependent oligopeptide transporter (POT/PTR) (TC 2.A.17) family.</text>
</comment>
<comment type="sequence caution" evidence="5">
    <conflict type="miscellaneous discrepancy">
        <sequence resource="EMBL-CDS" id="AAK32755"/>
    </conflict>
    <text>Intron retention.</text>
</comment>
<comment type="sequence caution" evidence="5">
    <conflict type="erroneous gene model prediction">
        <sequence resource="EMBL-CDS" id="CAB88358"/>
    </conflict>
</comment>
<gene>
    <name type="primary">NPF5.7</name>
    <name type="ordered locus">At3g53960</name>
    <name type="ORF">F5K20.260</name>
</gene>
<dbReference type="EMBL" id="AL132960">
    <property type="protein sequence ID" value="CAB88358.1"/>
    <property type="status" value="ALT_SEQ"/>
    <property type="molecule type" value="Genomic_DNA"/>
</dbReference>
<dbReference type="EMBL" id="CP002686">
    <property type="protein sequence ID" value="AEE79164.1"/>
    <property type="molecule type" value="Genomic_DNA"/>
</dbReference>
<dbReference type="EMBL" id="AF361587">
    <property type="protein sequence ID" value="AAK32755.1"/>
    <property type="status" value="ALT_SEQ"/>
    <property type="molecule type" value="mRNA"/>
</dbReference>
<dbReference type="PIR" id="T45936">
    <property type="entry name" value="T45936"/>
</dbReference>
<dbReference type="RefSeq" id="NP_190964.2">
    <property type="nucleotide sequence ID" value="NM_115256.4"/>
</dbReference>
<dbReference type="SMR" id="Q9M331"/>
<dbReference type="FunCoup" id="Q9M331">
    <property type="interactions" value="1807"/>
</dbReference>
<dbReference type="PaxDb" id="3702-AT3G53960.1"/>
<dbReference type="ProteomicsDB" id="226241"/>
<dbReference type="EnsemblPlants" id="AT3G53960.1">
    <property type="protein sequence ID" value="AT3G53960.1"/>
    <property type="gene ID" value="AT3G53960"/>
</dbReference>
<dbReference type="GeneID" id="824563"/>
<dbReference type="Gramene" id="AT3G53960.1">
    <property type="protein sequence ID" value="AT3G53960.1"/>
    <property type="gene ID" value="AT3G53960"/>
</dbReference>
<dbReference type="KEGG" id="ath:AT3G53960"/>
<dbReference type="Araport" id="AT3G53960"/>
<dbReference type="TAIR" id="AT3G53960"/>
<dbReference type="eggNOG" id="KOG1237">
    <property type="taxonomic scope" value="Eukaryota"/>
</dbReference>
<dbReference type="HOGENOM" id="CLU_009313_4_1_1"/>
<dbReference type="InParanoid" id="Q9M331"/>
<dbReference type="OMA" id="LCHTKNL"/>
<dbReference type="PhylomeDB" id="Q9M331"/>
<dbReference type="PRO" id="PR:Q9M331"/>
<dbReference type="Proteomes" id="UP000006548">
    <property type="component" value="Chromosome 3"/>
</dbReference>
<dbReference type="ExpressionAtlas" id="Q9M331">
    <property type="expression patterns" value="baseline and differential"/>
</dbReference>
<dbReference type="GO" id="GO:0016020">
    <property type="term" value="C:membrane"/>
    <property type="evidence" value="ECO:0007669"/>
    <property type="project" value="UniProtKB-SubCell"/>
</dbReference>
<dbReference type="GO" id="GO:0071916">
    <property type="term" value="F:dipeptide transmembrane transporter activity"/>
    <property type="evidence" value="ECO:0007669"/>
    <property type="project" value="InterPro"/>
</dbReference>
<dbReference type="GO" id="GO:0042937">
    <property type="term" value="F:tripeptide transmembrane transporter activity"/>
    <property type="evidence" value="ECO:0007669"/>
    <property type="project" value="InterPro"/>
</dbReference>
<dbReference type="CDD" id="cd17417">
    <property type="entry name" value="MFS_NPF5"/>
    <property type="match status" value="1"/>
</dbReference>
<dbReference type="Gene3D" id="1.20.1250.20">
    <property type="entry name" value="MFS general substrate transporter like domains"/>
    <property type="match status" value="1"/>
</dbReference>
<dbReference type="InterPro" id="IPR036259">
    <property type="entry name" value="MFS_trans_sf"/>
</dbReference>
<dbReference type="InterPro" id="IPR044739">
    <property type="entry name" value="NRT1/PTR"/>
</dbReference>
<dbReference type="InterPro" id="IPR000109">
    <property type="entry name" value="POT_fam"/>
</dbReference>
<dbReference type="InterPro" id="IPR018456">
    <property type="entry name" value="PTR2_symporter_CS"/>
</dbReference>
<dbReference type="PANTHER" id="PTHR11654">
    <property type="entry name" value="OLIGOPEPTIDE TRANSPORTER-RELATED"/>
    <property type="match status" value="1"/>
</dbReference>
<dbReference type="Pfam" id="PF00854">
    <property type="entry name" value="PTR2"/>
    <property type="match status" value="1"/>
</dbReference>
<dbReference type="SUPFAM" id="SSF103473">
    <property type="entry name" value="MFS general substrate transporter"/>
    <property type="match status" value="1"/>
</dbReference>
<dbReference type="PROSITE" id="PS01022">
    <property type="entry name" value="PTR2_1"/>
    <property type="match status" value="1"/>
</dbReference>
<name>PTR45_ARATH</name>
<proteinExistence type="evidence at transcript level"/>
<keyword id="KW-0472">Membrane</keyword>
<keyword id="KW-0597">Phosphoprotein</keyword>
<keyword id="KW-1185">Reference proteome</keyword>
<keyword id="KW-0812">Transmembrane</keyword>
<keyword id="KW-1133">Transmembrane helix</keyword>
<keyword id="KW-0813">Transport</keyword>
<reference key="1">
    <citation type="journal article" date="2000" name="Nature">
        <title>Sequence and analysis of chromosome 3 of the plant Arabidopsis thaliana.</title>
        <authorList>
            <person name="Salanoubat M."/>
            <person name="Lemcke K."/>
            <person name="Rieger M."/>
            <person name="Ansorge W."/>
            <person name="Unseld M."/>
            <person name="Fartmann B."/>
            <person name="Valle G."/>
            <person name="Bloecker H."/>
            <person name="Perez-Alonso M."/>
            <person name="Obermaier B."/>
            <person name="Delseny M."/>
            <person name="Boutry M."/>
            <person name="Grivell L.A."/>
            <person name="Mache R."/>
            <person name="Puigdomenech P."/>
            <person name="De Simone V."/>
            <person name="Choisne N."/>
            <person name="Artiguenave F."/>
            <person name="Robert C."/>
            <person name="Brottier P."/>
            <person name="Wincker P."/>
            <person name="Cattolico L."/>
            <person name="Weissenbach J."/>
            <person name="Saurin W."/>
            <person name="Quetier F."/>
            <person name="Schaefer M."/>
            <person name="Mueller-Auer S."/>
            <person name="Gabel C."/>
            <person name="Fuchs M."/>
            <person name="Benes V."/>
            <person name="Wurmbach E."/>
            <person name="Drzonek H."/>
            <person name="Erfle H."/>
            <person name="Jordan N."/>
            <person name="Bangert S."/>
            <person name="Wiedelmann R."/>
            <person name="Kranz H."/>
            <person name="Voss H."/>
            <person name="Holland R."/>
            <person name="Brandt P."/>
            <person name="Nyakatura G."/>
            <person name="Vezzi A."/>
            <person name="D'Angelo M."/>
            <person name="Pallavicini A."/>
            <person name="Toppo S."/>
            <person name="Simionati B."/>
            <person name="Conrad A."/>
            <person name="Hornischer K."/>
            <person name="Kauer G."/>
            <person name="Loehnert T.-H."/>
            <person name="Nordsiek G."/>
            <person name="Reichelt J."/>
            <person name="Scharfe M."/>
            <person name="Schoen O."/>
            <person name="Bargues M."/>
            <person name="Terol J."/>
            <person name="Climent J."/>
            <person name="Navarro P."/>
            <person name="Collado C."/>
            <person name="Perez-Perez A."/>
            <person name="Ottenwaelder B."/>
            <person name="Duchemin D."/>
            <person name="Cooke R."/>
            <person name="Laudie M."/>
            <person name="Berger-Llauro C."/>
            <person name="Purnelle B."/>
            <person name="Masuy D."/>
            <person name="de Haan M."/>
            <person name="Maarse A.C."/>
            <person name="Alcaraz J.-P."/>
            <person name="Cottet A."/>
            <person name="Casacuberta E."/>
            <person name="Monfort A."/>
            <person name="Argiriou A."/>
            <person name="Flores M."/>
            <person name="Liguori R."/>
            <person name="Vitale D."/>
            <person name="Mannhaupt G."/>
            <person name="Haase D."/>
            <person name="Schoof H."/>
            <person name="Rudd S."/>
            <person name="Zaccaria P."/>
            <person name="Mewes H.-W."/>
            <person name="Mayer K.F.X."/>
            <person name="Kaul S."/>
            <person name="Town C.D."/>
            <person name="Koo H.L."/>
            <person name="Tallon L.J."/>
            <person name="Jenkins J."/>
            <person name="Rooney T."/>
            <person name="Rizzo M."/>
            <person name="Walts A."/>
            <person name="Utterback T."/>
            <person name="Fujii C.Y."/>
            <person name="Shea T.P."/>
            <person name="Creasy T.H."/>
            <person name="Haas B."/>
            <person name="Maiti R."/>
            <person name="Wu D."/>
            <person name="Peterson J."/>
            <person name="Van Aken S."/>
            <person name="Pai G."/>
            <person name="Militscher J."/>
            <person name="Sellers P."/>
            <person name="Gill J.E."/>
            <person name="Feldblyum T.V."/>
            <person name="Preuss D."/>
            <person name="Lin X."/>
            <person name="Nierman W.C."/>
            <person name="Salzberg S.L."/>
            <person name="White O."/>
            <person name="Venter J.C."/>
            <person name="Fraser C.M."/>
            <person name="Kaneko T."/>
            <person name="Nakamura Y."/>
            <person name="Sato S."/>
            <person name="Kato T."/>
            <person name="Asamizu E."/>
            <person name="Sasamoto S."/>
            <person name="Kimura T."/>
            <person name="Idesawa K."/>
            <person name="Kawashima K."/>
            <person name="Kishida Y."/>
            <person name="Kiyokawa C."/>
            <person name="Kohara M."/>
            <person name="Matsumoto M."/>
            <person name="Matsuno A."/>
            <person name="Muraki A."/>
            <person name="Nakayama S."/>
            <person name="Nakazaki N."/>
            <person name="Shinpo S."/>
            <person name="Takeuchi C."/>
            <person name="Wada T."/>
            <person name="Watanabe A."/>
            <person name="Yamada M."/>
            <person name="Yasuda M."/>
            <person name="Tabata S."/>
        </authorList>
    </citation>
    <scope>NUCLEOTIDE SEQUENCE [LARGE SCALE GENOMIC DNA]</scope>
    <source>
        <strain>cv. Columbia</strain>
    </source>
</reference>
<reference key="2">
    <citation type="journal article" date="2017" name="Plant J.">
        <title>Araport11: a complete reannotation of the Arabidopsis thaliana reference genome.</title>
        <authorList>
            <person name="Cheng C.Y."/>
            <person name="Krishnakumar V."/>
            <person name="Chan A.P."/>
            <person name="Thibaud-Nissen F."/>
            <person name="Schobel S."/>
            <person name="Town C.D."/>
        </authorList>
    </citation>
    <scope>GENOME REANNOTATION</scope>
    <source>
        <strain>cv. Columbia</strain>
    </source>
</reference>
<reference key="3">
    <citation type="journal article" date="2003" name="Science">
        <title>Empirical analysis of transcriptional activity in the Arabidopsis genome.</title>
        <authorList>
            <person name="Yamada K."/>
            <person name="Lim J."/>
            <person name="Dale J.M."/>
            <person name="Chen H."/>
            <person name="Shinn P."/>
            <person name="Palm C.J."/>
            <person name="Southwick A.M."/>
            <person name="Wu H.C."/>
            <person name="Kim C.J."/>
            <person name="Nguyen M."/>
            <person name="Pham P.K."/>
            <person name="Cheuk R.F."/>
            <person name="Karlin-Newmann G."/>
            <person name="Liu S.X."/>
            <person name="Lam B."/>
            <person name="Sakano H."/>
            <person name="Wu T."/>
            <person name="Yu G."/>
            <person name="Miranda M."/>
            <person name="Quach H.L."/>
            <person name="Tripp M."/>
            <person name="Chang C.H."/>
            <person name="Lee J.M."/>
            <person name="Toriumi M.J."/>
            <person name="Chan M.M."/>
            <person name="Tang C.C."/>
            <person name="Onodera C.S."/>
            <person name="Deng J.M."/>
            <person name="Akiyama K."/>
            <person name="Ansari Y."/>
            <person name="Arakawa T."/>
            <person name="Banh J."/>
            <person name="Banno F."/>
            <person name="Bowser L."/>
            <person name="Brooks S.Y."/>
            <person name="Carninci P."/>
            <person name="Chao Q."/>
            <person name="Choy N."/>
            <person name="Enju A."/>
            <person name="Goldsmith A.D."/>
            <person name="Gurjal M."/>
            <person name="Hansen N.F."/>
            <person name="Hayashizaki Y."/>
            <person name="Johnson-Hopson C."/>
            <person name="Hsuan V.W."/>
            <person name="Iida K."/>
            <person name="Karnes M."/>
            <person name="Khan S."/>
            <person name="Koesema E."/>
            <person name="Ishida J."/>
            <person name="Jiang P.X."/>
            <person name="Jones T."/>
            <person name="Kawai J."/>
            <person name="Kamiya A."/>
            <person name="Meyers C."/>
            <person name="Nakajima M."/>
            <person name="Narusaka M."/>
            <person name="Seki M."/>
            <person name="Sakurai T."/>
            <person name="Satou M."/>
            <person name="Tamse R."/>
            <person name="Vaysberg M."/>
            <person name="Wallender E.K."/>
            <person name="Wong C."/>
            <person name="Yamamura Y."/>
            <person name="Yuan S."/>
            <person name="Shinozaki K."/>
            <person name="Davis R.W."/>
            <person name="Theologis A."/>
            <person name="Ecker J.R."/>
        </authorList>
    </citation>
    <scope>NUCLEOTIDE SEQUENCE [LARGE SCALE MRNA] OF 41-602</scope>
    <source>
        <strain>cv. Columbia</strain>
    </source>
</reference>
<reference key="4">
    <citation type="journal article" date="2007" name="FEBS Lett.">
        <title>Nitrate transporters and peptide transporters.</title>
        <authorList>
            <person name="Tsay Y.F."/>
            <person name="Chiu C.C."/>
            <person name="Tsai C.B."/>
            <person name="Ho C.H."/>
            <person name="Hsu P.K."/>
        </authorList>
    </citation>
    <scope>TISSUE SPECIFICITY</scope>
    <scope>GENE FAMILY</scope>
</reference>
<reference key="5">
    <citation type="journal article" date="2010" name="Plant Cell">
        <title>The Arabidopsis nitrate transporter NRT1.8 functions in nitrate removal from the xylem sap and mediates cadmium tolerance.</title>
        <authorList>
            <person name="Li J.Y."/>
            <person name="Fu Y.L."/>
            <person name="Pike S.M."/>
            <person name="Bao J."/>
            <person name="Tian W."/>
            <person name="Zhang Y."/>
            <person name="Chen C.Z."/>
            <person name="Zhang Y."/>
            <person name="Li H.M."/>
            <person name="Huang J."/>
            <person name="Li L.G."/>
            <person name="Schroeder J.I."/>
            <person name="Gassmann W."/>
            <person name="Gong J.M."/>
        </authorList>
    </citation>
    <scope>GENE FAMILY</scope>
</reference>
<reference key="6">
    <citation type="journal article" date="2014" name="Trends Plant Sci.">
        <title>A unified nomenclature of NITRATE TRANSPORTER 1/PEPTIDE TRANSPORTER family members in plants.</title>
        <authorList>
            <person name="Leran S."/>
            <person name="Varala K."/>
            <person name="Boyer J.C."/>
            <person name="Chiurazzi M."/>
            <person name="Crawford N."/>
            <person name="Daniel-Vedele F."/>
            <person name="David L."/>
            <person name="Dickstein R."/>
            <person name="Fernandez E."/>
            <person name="Forde B."/>
            <person name="Gassmann W."/>
            <person name="Geiger D."/>
            <person name="Gojon A."/>
            <person name="Gong J.M."/>
            <person name="Halkier B.A."/>
            <person name="Harris J.M."/>
            <person name="Hedrich R."/>
            <person name="Limami A.M."/>
            <person name="Rentsch D."/>
            <person name="Seo M."/>
            <person name="Tsay Y.F."/>
            <person name="Zhang M."/>
            <person name="Coruzzi G."/>
            <person name="Lacombe B."/>
        </authorList>
    </citation>
    <scope>GENE FAMILY</scope>
    <scope>NOMENCLATURE</scope>
</reference>
<sequence length="602" mass="67063">MEHNKVDTEPQDSYDDQQKWVLDSSTDSRGEIPLRAQTGAWRAALFIIGIEFSERLSYFGISTNLVVYLTTILHQDLKMAVKNTNYWSGVTTLMPLLGGFVADAYLGRYGTVLLATTIYLMGLILLTLSWFIPGLKACHEDMCVEPRKAHEIAFFIAIYLISIGTGGHKPSLESFGADQFEDGHPEERKMKMSYFNWWNAGLCAGILTAVTVIVYIEDRIGWGVASIILTIVMATSFFIFRIGKPFYRYRAPSGSPLTPMLQVFVAAIAKRNLPCPSDSSLLHELTNEEYTKGRLLSSSKNLKFLDKAAVIEDRNENTKAEKQSPWRLATVTKVEEVKLLINMIPIWFFTLAFGVCATQSSTLFIKQAIIMDRHITGTSFIVPPASLFSLIALSIIITVTIYEKLLVPLLRRATGNERGISILQRIGVGMVFSLFAMIIAALIEKKRLDYAKEHHMNKTMTLSAIWLAPQFLVLGVADAFTLVGLQEYFYDQVPDSMRSLGIAFYLSVLGAASFVNNLLITVSDHLAEEISGKGWFGKDLNSSRLDRFYWMLAALTAANICCFVIVAMRYTYKTVQPSLAVVADGGDDVETATGTNNTSKFT</sequence>
<accession>Q9M331</accession>
<accession>Q9ASZ3</accession>
<protein>
    <recommendedName>
        <fullName>Protein NRT1/ PTR FAMILY 5.7</fullName>
        <shortName>AtNPF5.7</shortName>
    </recommendedName>
</protein>
<evidence type="ECO:0000250" key="1"/>
<evidence type="ECO:0000250" key="2">
    <source>
        <dbReference type="UniProtKB" id="Q05085"/>
    </source>
</evidence>
<evidence type="ECO:0000255" key="3"/>
<evidence type="ECO:0000269" key="4">
    <source>
    </source>
</evidence>
<evidence type="ECO:0000305" key="5"/>